<comment type="function">
    <text evidence="1">Globally modulates RNA abundance by binding to RNase E (Rne) and regulating its endonucleolytic activity. Can modulate Rne action in a substrate-dependent manner by altering the composition of the degradosome. Modulates RNA-binding and helicase activities of the degradosome.</text>
</comment>
<comment type="subunit">
    <text evidence="1">Homotrimer. Binds to both RNA-binding sites in the C-terminal region of Rne and to RhlB.</text>
</comment>
<comment type="subcellular location">
    <subcellularLocation>
        <location evidence="1">Cytoplasm</location>
    </subcellularLocation>
</comment>
<comment type="similarity">
    <text evidence="1">Belongs to the RraA family.</text>
</comment>
<evidence type="ECO:0000255" key="1">
    <source>
        <dbReference type="HAMAP-Rule" id="MF_00471"/>
    </source>
</evidence>
<name>RRAA_YERPP</name>
<proteinExistence type="inferred from homology"/>
<gene>
    <name evidence="1" type="primary">rraA</name>
    <name type="ordered locus">YPDSF_3803</name>
</gene>
<accession>A4TS86</accession>
<dbReference type="EMBL" id="CP000668">
    <property type="protein sequence ID" value="ABP42148.1"/>
    <property type="molecule type" value="Genomic_DNA"/>
</dbReference>
<dbReference type="RefSeq" id="WP_002208945.1">
    <property type="nucleotide sequence ID" value="NZ_CP009715.1"/>
</dbReference>
<dbReference type="SMR" id="A4TS86"/>
<dbReference type="GeneID" id="57974491"/>
<dbReference type="KEGG" id="ypp:YPDSF_3803"/>
<dbReference type="PATRIC" id="fig|386656.14.peg.717"/>
<dbReference type="GO" id="GO:0005829">
    <property type="term" value="C:cytosol"/>
    <property type="evidence" value="ECO:0007669"/>
    <property type="project" value="TreeGrafter"/>
</dbReference>
<dbReference type="GO" id="GO:0060698">
    <property type="term" value="F:endoribonuclease inhibitor activity"/>
    <property type="evidence" value="ECO:0007669"/>
    <property type="project" value="UniProtKB-UniRule"/>
</dbReference>
<dbReference type="GO" id="GO:0019899">
    <property type="term" value="F:enzyme binding"/>
    <property type="evidence" value="ECO:0007669"/>
    <property type="project" value="UniProtKB-UniRule"/>
</dbReference>
<dbReference type="GO" id="GO:1902369">
    <property type="term" value="P:negative regulation of RNA catabolic process"/>
    <property type="evidence" value="ECO:0007669"/>
    <property type="project" value="TreeGrafter"/>
</dbReference>
<dbReference type="CDD" id="cd16841">
    <property type="entry name" value="RraA_family"/>
    <property type="match status" value="1"/>
</dbReference>
<dbReference type="Gene3D" id="3.50.30.40">
    <property type="entry name" value="Ribonuclease E inhibitor RraA/RraA-like"/>
    <property type="match status" value="1"/>
</dbReference>
<dbReference type="HAMAP" id="MF_00471">
    <property type="entry name" value="RraA"/>
    <property type="match status" value="1"/>
</dbReference>
<dbReference type="InterPro" id="IPR010203">
    <property type="entry name" value="RraA"/>
</dbReference>
<dbReference type="InterPro" id="IPR005493">
    <property type="entry name" value="RraA/RraA-like"/>
</dbReference>
<dbReference type="InterPro" id="IPR036704">
    <property type="entry name" value="RraA/RraA-like_sf"/>
</dbReference>
<dbReference type="InterPro" id="IPR014339">
    <property type="entry name" value="RraA_gpbac"/>
</dbReference>
<dbReference type="NCBIfam" id="TIGR01935">
    <property type="entry name" value="NOT-MenG"/>
    <property type="match status" value="1"/>
</dbReference>
<dbReference type="NCBIfam" id="NF006875">
    <property type="entry name" value="PRK09372.1"/>
    <property type="match status" value="1"/>
</dbReference>
<dbReference type="NCBIfam" id="TIGR02998">
    <property type="entry name" value="RraA_entero"/>
    <property type="match status" value="1"/>
</dbReference>
<dbReference type="PANTHER" id="PTHR33254">
    <property type="entry name" value="4-HYDROXY-4-METHYL-2-OXOGLUTARATE ALDOLASE 3-RELATED"/>
    <property type="match status" value="1"/>
</dbReference>
<dbReference type="PANTHER" id="PTHR33254:SF29">
    <property type="entry name" value="REGULATOR OF RIBONUCLEASE ACTIVITY A"/>
    <property type="match status" value="1"/>
</dbReference>
<dbReference type="Pfam" id="PF03737">
    <property type="entry name" value="RraA-like"/>
    <property type="match status" value="1"/>
</dbReference>
<dbReference type="SUPFAM" id="SSF89562">
    <property type="entry name" value="RraA-like"/>
    <property type="match status" value="1"/>
</dbReference>
<sequence>MKYDTSDLCDIYHEEVNVVEPLFSNFGGRTSFGGKITTVKCFEDNGLLFDLLEENGLGRVLVVDGGGSVRRALINAELAELALKNEWEGIVVYGAVRQVDDLAELDIGIQAMAAIPVGAADEGVGESDIRVNFGGVTFFSGDHLYADNTGIILSEDPLDIE</sequence>
<keyword id="KW-0963">Cytoplasm</keyword>
<organism>
    <name type="scientific">Yersinia pestis (strain Pestoides F)</name>
    <dbReference type="NCBI Taxonomy" id="386656"/>
    <lineage>
        <taxon>Bacteria</taxon>
        <taxon>Pseudomonadati</taxon>
        <taxon>Pseudomonadota</taxon>
        <taxon>Gammaproteobacteria</taxon>
        <taxon>Enterobacterales</taxon>
        <taxon>Yersiniaceae</taxon>
        <taxon>Yersinia</taxon>
    </lineage>
</organism>
<feature type="chain" id="PRO_1000013884" description="Regulator of ribonuclease activity A">
    <location>
        <begin position="1"/>
        <end position="161"/>
    </location>
</feature>
<reference key="1">
    <citation type="submission" date="2007-02" db="EMBL/GenBank/DDBJ databases">
        <title>Complete sequence of chromosome of Yersinia pestis Pestoides F.</title>
        <authorList>
            <consortium name="US DOE Joint Genome Institute"/>
            <person name="Copeland A."/>
            <person name="Lucas S."/>
            <person name="Lapidus A."/>
            <person name="Barry K."/>
            <person name="Detter J.C."/>
            <person name="Glavina del Rio T."/>
            <person name="Hammon N."/>
            <person name="Israni S."/>
            <person name="Dalin E."/>
            <person name="Tice H."/>
            <person name="Pitluck S."/>
            <person name="Di Bartolo G."/>
            <person name="Chain P."/>
            <person name="Malfatti S."/>
            <person name="Shin M."/>
            <person name="Vergez L."/>
            <person name="Schmutz J."/>
            <person name="Larimer F."/>
            <person name="Land M."/>
            <person name="Hauser L."/>
            <person name="Worsham P."/>
            <person name="Chu M."/>
            <person name="Bearden S."/>
            <person name="Garcia E."/>
            <person name="Richardson P."/>
        </authorList>
    </citation>
    <scope>NUCLEOTIDE SEQUENCE [LARGE SCALE GENOMIC DNA]</scope>
    <source>
        <strain>Pestoides F</strain>
    </source>
</reference>
<protein>
    <recommendedName>
        <fullName evidence="1">Regulator of ribonuclease activity A</fullName>
    </recommendedName>
</protein>